<keyword id="KW-0274">FAD</keyword>
<keyword id="KW-0285">Flavoprotein</keyword>
<keyword id="KW-0520">NAD</keyword>
<keyword id="KW-0560">Oxidoreductase</keyword>
<keyword id="KW-1185">Reference proteome</keyword>
<evidence type="ECO:0000250" key="1"/>
<evidence type="ECO:0000269" key="2">
    <source>
    </source>
</evidence>
<evidence type="ECO:0000305" key="3"/>
<dbReference type="EC" id="1.5.1.54" evidence="2"/>
<dbReference type="EMBL" id="AF174486">
    <property type="protein sequence ID" value="AAD51733.1"/>
    <property type="molecule type" value="mRNA"/>
</dbReference>
<dbReference type="RefSeq" id="NP_001104947.1">
    <property type="nucleotide sequence ID" value="NM_001111477.2"/>
</dbReference>
<dbReference type="RefSeq" id="XP_035819633.1">
    <property type="nucleotide sequence ID" value="XM_035963740.1"/>
</dbReference>
<dbReference type="SMR" id="Q9SE94"/>
<dbReference type="FunCoup" id="Q9SE94">
    <property type="interactions" value="2746"/>
</dbReference>
<dbReference type="STRING" id="4577.Q9SE94"/>
<dbReference type="PaxDb" id="4577-GRMZM2G347056_P01"/>
<dbReference type="ProMEX" id="Q9SE94"/>
<dbReference type="EnsemblPlants" id="Zm00001eb062180_T001">
    <property type="protein sequence ID" value="Zm00001eb062180_P001"/>
    <property type="gene ID" value="Zm00001eb062180"/>
</dbReference>
<dbReference type="EnsemblPlants" id="Zm00001eb062180_T002">
    <property type="protein sequence ID" value="Zm00001eb062180_P002"/>
    <property type="gene ID" value="Zm00001eb062180"/>
</dbReference>
<dbReference type="EnsemblPlants" id="Zm00001eb062180_T003">
    <property type="protein sequence ID" value="Zm00001eb062180_P003"/>
    <property type="gene ID" value="Zm00001eb062180"/>
</dbReference>
<dbReference type="GeneID" id="118474709"/>
<dbReference type="GeneID" id="541794"/>
<dbReference type="Gramene" id="Zm00001eb062180_T001">
    <property type="protein sequence ID" value="Zm00001eb062180_P001"/>
    <property type="gene ID" value="Zm00001eb062180"/>
</dbReference>
<dbReference type="Gramene" id="Zm00001eb062180_T002">
    <property type="protein sequence ID" value="Zm00001eb062180_P002"/>
    <property type="gene ID" value="Zm00001eb062180"/>
</dbReference>
<dbReference type="Gramene" id="Zm00001eb062180_T003">
    <property type="protein sequence ID" value="Zm00001eb062180_P003"/>
    <property type="gene ID" value="Zm00001eb062180"/>
</dbReference>
<dbReference type="KEGG" id="zma:541794"/>
<dbReference type="MaizeGDB" id="146840"/>
<dbReference type="eggNOG" id="KOG0564">
    <property type="taxonomic scope" value="Eukaryota"/>
</dbReference>
<dbReference type="HOGENOM" id="CLU_025841_2_2_1"/>
<dbReference type="InParanoid" id="Q9SE94"/>
<dbReference type="OrthoDB" id="16284at2759"/>
<dbReference type="BRENDA" id="1.5.1.20">
    <property type="organism ID" value="6752"/>
</dbReference>
<dbReference type="BRENDA" id="1.5.1.54">
    <property type="organism ID" value="6752"/>
</dbReference>
<dbReference type="UniPathway" id="UPA00193"/>
<dbReference type="Proteomes" id="UP000007305">
    <property type="component" value="Chromosome 1"/>
</dbReference>
<dbReference type="ExpressionAtlas" id="Q9SE94">
    <property type="expression patterns" value="baseline and differential"/>
</dbReference>
<dbReference type="GO" id="GO:0071949">
    <property type="term" value="F:FAD binding"/>
    <property type="evidence" value="ECO:0000318"/>
    <property type="project" value="GO_Central"/>
</dbReference>
<dbReference type="GO" id="GO:0004489">
    <property type="term" value="F:methylenetetrahydrofolate reductase (NAD(P)H) activity"/>
    <property type="evidence" value="ECO:0000318"/>
    <property type="project" value="GO_Central"/>
</dbReference>
<dbReference type="GO" id="GO:0106312">
    <property type="term" value="F:methylenetetrahydrofolate reductase (NADH) activity"/>
    <property type="evidence" value="ECO:0007669"/>
    <property type="project" value="RHEA"/>
</dbReference>
<dbReference type="GO" id="GO:0009086">
    <property type="term" value="P:methionine biosynthetic process"/>
    <property type="evidence" value="ECO:0000318"/>
    <property type="project" value="GO_Central"/>
</dbReference>
<dbReference type="GO" id="GO:0035999">
    <property type="term" value="P:tetrahydrofolate interconversion"/>
    <property type="evidence" value="ECO:0000318"/>
    <property type="project" value="GO_Central"/>
</dbReference>
<dbReference type="CDD" id="cd00537">
    <property type="entry name" value="MTHFR"/>
    <property type="match status" value="1"/>
</dbReference>
<dbReference type="FunFam" id="3.20.20.220:FF:000005">
    <property type="entry name" value="Methylenetetrahydrofolate reductase"/>
    <property type="match status" value="1"/>
</dbReference>
<dbReference type="Gene3D" id="3.20.20.220">
    <property type="match status" value="1"/>
</dbReference>
<dbReference type="InterPro" id="IPR029041">
    <property type="entry name" value="FAD-linked_oxidoreductase-like"/>
</dbReference>
<dbReference type="InterPro" id="IPR004621">
    <property type="entry name" value="Fadh2_euk"/>
</dbReference>
<dbReference type="InterPro" id="IPR003171">
    <property type="entry name" value="Mehydrof_redctse-like"/>
</dbReference>
<dbReference type="InterPro" id="IPR053806">
    <property type="entry name" value="MTHFR_C"/>
</dbReference>
<dbReference type="NCBIfam" id="TIGR00677">
    <property type="entry name" value="fadh2_euk"/>
    <property type="match status" value="1"/>
</dbReference>
<dbReference type="PANTHER" id="PTHR45754">
    <property type="entry name" value="METHYLENETETRAHYDROFOLATE REDUCTASE"/>
    <property type="match status" value="1"/>
</dbReference>
<dbReference type="PANTHER" id="PTHR45754:SF3">
    <property type="entry name" value="METHYLENETETRAHYDROFOLATE REDUCTASE (NADPH)"/>
    <property type="match status" value="1"/>
</dbReference>
<dbReference type="Pfam" id="PF02219">
    <property type="entry name" value="MTHFR"/>
    <property type="match status" value="1"/>
</dbReference>
<dbReference type="Pfam" id="PF21895">
    <property type="entry name" value="MTHFR_C"/>
    <property type="match status" value="1"/>
</dbReference>
<dbReference type="SUPFAM" id="SSF51730">
    <property type="entry name" value="FAD-linked oxidoreductase"/>
    <property type="match status" value="1"/>
</dbReference>
<organism>
    <name type="scientific">Zea mays</name>
    <name type="common">Maize</name>
    <dbReference type="NCBI Taxonomy" id="4577"/>
    <lineage>
        <taxon>Eukaryota</taxon>
        <taxon>Viridiplantae</taxon>
        <taxon>Streptophyta</taxon>
        <taxon>Embryophyta</taxon>
        <taxon>Tracheophyta</taxon>
        <taxon>Spermatophyta</taxon>
        <taxon>Magnoliopsida</taxon>
        <taxon>Liliopsida</taxon>
        <taxon>Poales</taxon>
        <taxon>Poaceae</taxon>
        <taxon>PACMAD clade</taxon>
        <taxon>Panicoideae</taxon>
        <taxon>Andropogonodae</taxon>
        <taxon>Andropogoneae</taxon>
        <taxon>Tripsacinae</taxon>
        <taxon>Zea</taxon>
    </lineage>
</organism>
<proteinExistence type="evidence at protein level"/>
<accession>Q9SE94</accession>
<feature type="chain" id="PRO_0000190251" description="Methylenetetrahydrofolate reductase (NADH) 1">
    <location>
        <begin position="1"/>
        <end position="593"/>
    </location>
</feature>
<feature type="active site" description="Proton donor/acceptor" evidence="1">
    <location>
        <position position="21"/>
    </location>
</feature>
<feature type="binding site" evidence="1">
    <location>
        <begin position="21"/>
        <end position="26"/>
    </location>
    <ligand>
        <name>NAD(+)</name>
        <dbReference type="ChEBI" id="CHEBI:57540"/>
    </ligand>
</feature>
<feature type="binding site" evidence="1">
    <location>
        <begin position="52"/>
        <end position="53"/>
    </location>
    <ligand>
        <name>FAD</name>
        <dbReference type="ChEBI" id="CHEBI:57692"/>
    </ligand>
</feature>
<feature type="binding site" evidence="1">
    <location>
        <begin position="52"/>
        <end position="53"/>
    </location>
    <ligand>
        <name>NAD(+)</name>
        <dbReference type="ChEBI" id="CHEBI:57540"/>
    </ligand>
</feature>
<feature type="binding site" evidence="1">
    <location>
        <position position="81"/>
    </location>
    <ligand>
        <name>FAD</name>
        <dbReference type="ChEBI" id="CHEBI:57692"/>
    </ligand>
</feature>
<feature type="binding site" evidence="1">
    <location>
        <begin position="111"/>
        <end position="113"/>
    </location>
    <ligand>
        <name>FAD</name>
        <dbReference type="ChEBI" id="CHEBI:57692"/>
    </ligand>
</feature>
<feature type="binding site" evidence="1">
    <location>
        <position position="113"/>
    </location>
    <ligand>
        <name>substrate</name>
    </ligand>
</feature>
<feature type="binding site" evidence="1">
    <location>
        <position position="153"/>
    </location>
    <ligand>
        <name>FAD</name>
        <dbReference type="ChEBI" id="CHEBI:57692"/>
    </ligand>
</feature>
<feature type="binding site" evidence="1">
    <location>
        <begin position="157"/>
        <end position="160"/>
    </location>
    <ligand>
        <name>FAD</name>
        <dbReference type="ChEBI" id="CHEBI:57692"/>
    </ligand>
</feature>
<feature type="binding site" evidence="1">
    <location>
        <position position="175"/>
    </location>
    <ligand>
        <name>FAD</name>
        <dbReference type="ChEBI" id="CHEBI:57692"/>
    </ligand>
</feature>
<feature type="binding site" evidence="1">
    <location>
        <position position="182"/>
    </location>
    <ligand>
        <name>FAD</name>
        <dbReference type="ChEBI" id="CHEBI:57692"/>
    </ligand>
</feature>
<feature type="binding site" evidence="1">
    <location>
        <position position="193"/>
    </location>
    <ligand>
        <name>substrate</name>
    </ligand>
</feature>
<feature type="binding site" evidence="1">
    <location>
        <position position="285"/>
    </location>
    <ligand>
        <name>substrate</name>
    </ligand>
</feature>
<reference key="1">
    <citation type="journal article" date="1999" name="J. Biol. Chem.">
        <title>Isolation, characterization, and functional expression of cDNAs encoding NADH-dependent methylenetetrahydrofolate reductase from higher plants.</title>
        <authorList>
            <person name="Roje S."/>
            <person name="Wang H."/>
            <person name="McNeil S.D."/>
            <person name="Raymond R.K."/>
            <person name="Appling D.R."/>
            <person name="Shachar-Hill Y."/>
            <person name="Bohnert H.J."/>
            <person name="Hanson A.D."/>
        </authorList>
    </citation>
    <scope>NUCLEOTIDE SEQUENCE [MRNA]</scope>
    <scope>FUNCTION</scope>
    <scope>CATALYTIC ACTIVITY</scope>
    <scope>ACTIVITY REGULATION</scope>
</reference>
<protein>
    <recommendedName>
        <fullName>Methylenetetrahydrofolate reductase (NADH) 1</fullName>
        <ecNumber evidence="2">1.5.1.54</ecNumber>
    </recommendedName>
    <alternativeName>
        <fullName>ZmMTHFR1</fullName>
    </alternativeName>
</protein>
<name>MTHR1_MAIZE</name>
<sequence length="593" mass="66429">MKVIEKILEAAGDGRTAFSFEYFPPKTEEGVENLFERMDRMVAHGPSFCDITWGAGGSTADLTLEIANRMQNMVCVETMMHLTCTNMPVEKIDHALETIKSNGIQNVLALRGDPPHGQDKFVQVEGGFACALDLVQHIRAKYGDYFGITVAGYPEAHPDAIQGEGGATLEAYSNDLAYLKRKVDAGADLIVTQLFYDTDIFLKFVNDCRQIGITCPIVPGIMPINNYKGFLRMTGFCKTKIPSEITAALDPIKDNEEAVRQYGIHLGTEMCKKILATGIKTLHLYTLNMDKSAIGILMNLGLIEESKVSRPLPWRPATNVFRVKEDVRPIFWANRPKSYLKRTLGWDQYPHGRWGDSRNPSYGALTDHQFTRPRGRGKKLQEEWAVPLKSVEDISERFTNFCQGKLTSSPWSELDGLQPETKIIDDQLVNINQKGFLTINSQPAVNGEKSDSPTVGWGGPGGYVYQKAYLEFFCAKEKLDQLIEKIKAFPSLTYIAVNKDGETFSNISPNAVNAVTWGVFPGKEIIQPTVVDHASFMVWKDEAFEIWTRGWGCMFPEGDSSRELLEKVQKTYYLVSLVDNDYVQGDLFAAFKI</sequence>
<comment type="function">
    <text evidence="2">The probable reversibility of the MTHFR reaction in plants suggests that they can metabolize the methyl group of 5,10-methylenetetrahydrofolate to serine, sugars and starch.</text>
</comment>
<comment type="catalytic activity">
    <reaction evidence="2">
        <text>(6S)-5-methyl-5,6,7,8-tetrahydrofolate + NAD(+) = (6R)-5,10-methylene-5,6,7,8-tetrahydrofolate + NADH + H(+)</text>
        <dbReference type="Rhea" id="RHEA:19821"/>
        <dbReference type="ChEBI" id="CHEBI:15378"/>
        <dbReference type="ChEBI" id="CHEBI:15636"/>
        <dbReference type="ChEBI" id="CHEBI:18608"/>
        <dbReference type="ChEBI" id="CHEBI:57540"/>
        <dbReference type="ChEBI" id="CHEBI:57945"/>
        <dbReference type="EC" id="1.5.1.54"/>
    </reaction>
</comment>
<comment type="cofactor">
    <cofactor evidence="1">
        <name>FAD</name>
        <dbReference type="ChEBI" id="CHEBI:57692"/>
    </cofactor>
</comment>
<comment type="activity regulation">
    <text evidence="2">Plant MTHFRs strongly prefer NADH over NADPH. Not inhibited by methionine or S-adenosylmethionine.</text>
</comment>
<comment type="pathway">
    <text>One-carbon metabolism; tetrahydrofolate interconversion.</text>
</comment>
<comment type="subunit">
    <text evidence="1">Homodimer.</text>
</comment>
<comment type="similarity">
    <text evidence="3">Belongs to the methylenetetrahydrofolate reductase family.</text>
</comment>